<accession>Q1QMB9</accession>
<organism>
    <name type="scientific">Nitrobacter hamburgensis (strain DSM 10229 / NCIMB 13809 / X14)</name>
    <dbReference type="NCBI Taxonomy" id="323097"/>
    <lineage>
        <taxon>Bacteria</taxon>
        <taxon>Pseudomonadati</taxon>
        <taxon>Pseudomonadota</taxon>
        <taxon>Alphaproteobacteria</taxon>
        <taxon>Hyphomicrobiales</taxon>
        <taxon>Nitrobacteraceae</taxon>
        <taxon>Nitrobacter</taxon>
    </lineage>
</organism>
<reference key="1">
    <citation type="submission" date="2006-03" db="EMBL/GenBank/DDBJ databases">
        <title>Complete sequence of chromosome of Nitrobacter hamburgensis X14.</title>
        <authorList>
            <consortium name="US DOE Joint Genome Institute"/>
            <person name="Copeland A."/>
            <person name="Lucas S."/>
            <person name="Lapidus A."/>
            <person name="Barry K."/>
            <person name="Detter J.C."/>
            <person name="Glavina del Rio T."/>
            <person name="Hammon N."/>
            <person name="Israni S."/>
            <person name="Dalin E."/>
            <person name="Tice H."/>
            <person name="Pitluck S."/>
            <person name="Chain P."/>
            <person name="Malfatti S."/>
            <person name="Shin M."/>
            <person name="Vergez L."/>
            <person name="Schmutz J."/>
            <person name="Larimer F."/>
            <person name="Land M."/>
            <person name="Hauser L."/>
            <person name="Kyrpides N."/>
            <person name="Ivanova N."/>
            <person name="Ward B."/>
            <person name="Arp D."/>
            <person name="Klotz M."/>
            <person name="Stein L."/>
            <person name="O'Mullan G."/>
            <person name="Starkenburg S."/>
            <person name="Sayavedra L."/>
            <person name="Poret-Peterson A.T."/>
            <person name="Gentry M.E."/>
            <person name="Bruce D."/>
            <person name="Richardson P."/>
        </authorList>
    </citation>
    <scope>NUCLEOTIDE SEQUENCE [LARGE SCALE GENOMIC DNA]</scope>
    <source>
        <strain>DSM 10229 / NCIMB 13809 / X14</strain>
    </source>
</reference>
<dbReference type="EC" id="2.1.2.1" evidence="1"/>
<dbReference type="EMBL" id="CP000319">
    <property type="protein sequence ID" value="ABE62628.1"/>
    <property type="molecule type" value="Genomic_DNA"/>
</dbReference>
<dbReference type="RefSeq" id="WP_011510310.1">
    <property type="nucleotide sequence ID" value="NC_007964.1"/>
</dbReference>
<dbReference type="SMR" id="Q1QMB9"/>
<dbReference type="STRING" id="323097.Nham_1814"/>
<dbReference type="KEGG" id="nha:Nham_1814"/>
<dbReference type="eggNOG" id="COG0112">
    <property type="taxonomic scope" value="Bacteria"/>
</dbReference>
<dbReference type="HOGENOM" id="CLU_022477_2_1_5"/>
<dbReference type="OrthoDB" id="9803846at2"/>
<dbReference type="UniPathway" id="UPA00193"/>
<dbReference type="UniPathway" id="UPA00288">
    <property type="reaction ID" value="UER01023"/>
</dbReference>
<dbReference type="Proteomes" id="UP000001953">
    <property type="component" value="Chromosome"/>
</dbReference>
<dbReference type="GO" id="GO:0005829">
    <property type="term" value="C:cytosol"/>
    <property type="evidence" value="ECO:0007669"/>
    <property type="project" value="TreeGrafter"/>
</dbReference>
<dbReference type="GO" id="GO:0004372">
    <property type="term" value="F:glycine hydroxymethyltransferase activity"/>
    <property type="evidence" value="ECO:0007669"/>
    <property type="project" value="UniProtKB-UniRule"/>
</dbReference>
<dbReference type="GO" id="GO:0030170">
    <property type="term" value="F:pyridoxal phosphate binding"/>
    <property type="evidence" value="ECO:0007669"/>
    <property type="project" value="UniProtKB-UniRule"/>
</dbReference>
<dbReference type="GO" id="GO:0019264">
    <property type="term" value="P:glycine biosynthetic process from serine"/>
    <property type="evidence" value="ECO:0007669"/>
    <property type="project" value="UniProtKB-UniRule"/>
</dbReference>
<dbReference type="GO" id="GO:0035999">
    <property type="term" value="P:tetrahydrofolate interconversion"/>
    <property type="evidence" value="ECO:0007669"/>
    <property type="project" value="UniProtKB-UniRule"/>
</dbReference>
<dbReference type="CDD" id="cd00378">
    <property type="entry name" value="SHMT"/>
    <property type="match status" value="1"/>
</dbReference>
<dbReference type="FunFam" id="3.40.640.10:FF:000001">
    <property type="entry name" value="Serine hydroxymethyltransferase"/>
    <property type="match status" value="1"/>
</dbReference>
<dbReference type="FunFam" id="3.90.1150.10:FF:000003">
    <property type="entry name" value="Serine hydroxymethyltransferase"/>
    <property type="match status" value="1"/>
</dbReference>
<dbReference type="Gene3D" id="3.90.1150.10">
    <property type="entry name" value="Aspartate Aminotransferase, domain 1"/>
    <property type="match status" value="1"/>
</dbReference>
<dbReference type="Gene3D" id="3.40.640.10">
    <property type="entry name" value="Type I PLP-dependent aspartate aminotransferase-like (Major domain)"/>
    <property type="match status" value="1"/>
</dbReference>
<dbReference type="HAMAP" id="MF_00051">
    <property type="entry name" value="SHMT"/>
    <property type="match status" value="1"/>
</dbReference>
<dbReference type="InterPro" id="IPR015424">
    <property type="entry name" value="PyrdxlP-dep_Trfase"/>
</dbReference>
<dbReference type="InterPro" id="IPR015421">
    <property type="entry name" value="PyrdxlP-dep_Trfase_major"/>
</dbReference>
<dbReference type="InterPro" id="IPR015422">
    <property type="entry name" value="PyrdxlP-dep_Trfase_small"/>
</dbReference>
<dbReference type="InterPro" id="IPR001085">
    <property type="entry name" value="Ser_HO-MeTrfase"/>
</dbReference>
<dbReference type="InterPro" id="IPR049943">
    <property type="entry name" value="Ser_HO-MeTrfase-like"/>
</dbReference>
<dbReference type="InterPro" id="IPR019798">
    <property type="entry name" value="Ser_HO-MeTrfase_PLP_BS"/>
</dbReference>
<dbReference type="InterPro" id="IPR039429">
    <property type="entry name" value="SHMT-like_dom"/>
</dbReference>
<dbReference type="NCBIfam" id="NF000586">
    <property type="entry name" value="PRK00011.1"/>
    <property type="match status" value="1"/>
</dbReference>
<dbReference type="PANTHER" id="PTHR11680">
    <property type="entry name" value="SERINE HYDROXYMETHYLTRANSFERASE"/>
    <property type="match status" value="1"/>
</dbReference>
<dbReference type="PANTHER" id="PTHR11680:SF35">
    <property type="entry name" value="SERINE HYDROXYMETHYLTRANSFERASE 1"/>
    <property type="match status" value="1"/>
</dbReference>
<dbReference type="Pfam" id="PF00464">
    <property type="entry name" value="SHMT"/>
    <property type="match status" value="1"/>
</dbReference>
<dbReference type="PIRSF" id="PIRSF000412">
    <property type="entry name" value="SHMT"/>
    <property type="match status" value="1"/>
</dbReference>
<dbReference type="SUPFAM" id="SSF53383">
    <property type="entry name" value="PLP-dependent transferases"/>
    <property type="match status" value="1"/>
</dbReference>
<dbReference type="PROSITE" id="PS00096">
    <property type="entry name" value="SHMT"/>
    <property type="match status" value="1"/>
</dbReference>
<gene>
    <name evidence="1" type="primary">glyA</name>
    <name type="ordered locus">Nham_1814</name>
</gene>
<name>GLYA_NITHX</name>
<keyword id="KW-0028">Amino-acid biosynthesis</keyword>
<keyword id="KW-0963">Cytoplasm</keyword>
<keyword id="KW-0554">One-carbon metabolism</keyword>
<keyword id="KW-0663">Pyridoxal phosphate</keyword>
<keyword id="KW-1185">Reference proteome</keyword>
<keyword id="KW-0808">Transferase</keyword>
<feature type="chain" id="PRO_1000006284" description="Serine hydroxymethyltransferase">
    <location>
        <begin position="1"/>
        <end position="434"/>
    </location>
</feature>
<feature type="binding site" evidence="1">
    <location>
        <position position="132"/>
    </location>
    <ligand>
        <name>(6S)-5,6,7,8-tetrahydrofolate</name>
        <dbReference type="ChEBI" id="CHEBI:57453"/>
    </ligand>
</feature>
<feature type="binding site" evidence="1">
    <location>
        <begin position="136"/>
        <end position="138"/>
    </location>
    <ligand>
        <name>(6S)-5,6,7,8-tetrahydrofolate</name>
        <dbReference type="ChEBI" id="CHEBI:57453"/>
    </ligand>
</feature>
<feature type="site" description="Plays an important role in substrate specificity" evidence="1">
    <location>
        <position position="240"/>
    </location>
</feature>
<feature type="modified residue" description="N6-(pyridoxal phosphate)lysine" evidence="1">
    <location>
        <position position="241"/>
    </location>
</feature>
<protein>
    <recommendedName>
        <fullName evidence="1">Serine hydroxymethyltransferase</fullName>
        <shortName evidence="1">SHMT</shortName>
        <shortName evidence="1">Serine methylase</shortName>
        <ecNumber evidence="1">2.1.2.1</ecNumber>
    </recommendedName>
</protein>
<proteinExistence type="inferred from homology"/>
<evidence type="ECO:0000255" key="1">
    <source>
        <dbReference type="HAMAP-Rule" id="MF_00051"/>
    </source>
</evidence>
<sequence>MNSSAKTASAPDSFFTATLAEADPEIAAAIKGELGRQRHEIELIASENIVSRAVLEAQGSVMTNKYAEGYPGARYYGGCEWVDVAETLAIERAKKLFGAQFANVQPNSGSQMNQAVFLALLQPGDTFMGLDLAAGGHLTHGAPVNMSGKWFKAAHYTVRRDDHLIDMDEVARRAEEVKPKLIIAGGSAYSRPWDFKRFREIADSVGAYLMVDMAHFAGLVAGGVHASPVPHAHVTTTTTHKSLRGPRGGLILCNDEALAKKFNSAIFPGLQGGPLMHVIAAKAVAFGEALRPDFKIYAKNVVENAKALAESLRGNGFDIISGGTDNHLMLVDLRPKGLRGNVSEKALVRAAITCNKNGIPFDPEKPFVTSGLRLGTPAATTRGFGVAEFKQVGGLIAEVLNAIAQADDGKAPLVEAAVKEKVKALTNRFPIYQD</sequence>
<comment type="function">
    <text evidence="1">Catalyzes the reversible interconversion of serine and glycine with tetrahydrofolate (THF) serving as the one-carbon carrier. This reaction serves as the major source of one-carbon groups required for the biosynthesis of purines, thymidylate, methionine, and other important biomolecules. Also exhibits THF-independent aldolase activity toward beta-hydroxyamino acids, producing glycine and aldehydes, via a retro-aldol mechanism.</text>
</comment>
<comment type="catalytic activity">
    <reaction evidence="1">
        <text>(6R)-5,10-methylene-5,6,7,8-tetrahydrofolate + glycine + H2O = (6S)-5,6,7,8-tetrahydrofolate + L-serine</text>
        <dbReference type="Rhea" id="RHEA:15481"/>
        <dbReference type="ChEBI" id="CHEBI:15377"/>
        <dbReference type="ChEBI" id="CHEBI:15636"/>
        <dbReference type="ChEBI" id="CHEBI:33384"/>
        <dbReference type="ChEBI" id="CHEBI:57305"/>
        <dbReference type="ChEBI" id="CHEBI:57453"/>
        <dbReference type="EC" id="2.1.2.1"/>
    </reaction>
</comment>
<comment type="cofactor">
    <cofactor evidence="1">
        <name>pyridoxal 5'-phosphate</name>
        <dbReference type="ChEBI" id="CHEBI:597326"/>
    </cofactor>
</comment>
<comment type="pathway">
    <text evidence="1">One-carbon metabolism; tetrahydrofolate interconversion.</text>
</comment>
<comment type="pathway">
    <text evidence="1">Amino-acid biosynthesis; glycine biosynthesis; glycine from L-serine: step 1/1.</text>
</comment>
<comment type="subunit">
    <text evidence="1">Homodimer.</text>
</comment>
<comment type="subcellular location">
    <subcellularLocation>
        <location evidence="1">Cytoplasm</location>
    </subcellularLocation>
</comment>
<comment type="similarity">
    <text evidence="1">Belongs to the SHMT family.</text>
</comment>